<sequence length="318" mass="34376">MFGVTLAELSASLGDPVLALGLAAFALLLLAIPISFWMVSGGSNSAVVTLLVALANLVLTAQLVLRWWQSGHFPISNLYESLCFLAWACTLAQLLVERSLSSPIVSAAATPMALLCVAFASFALPETLQEASPLVPALRSSWLVMHVSVIMCSYAALLVGSFLSMAVLFTDRQQTLELRSSSIGTGGFRQAKLATSSMDQSDGLRLSSINLSRTEQLDSLSYRTITVGFLLLTLGLISGAVWANEAWGSWWSWDPKETWALICWMVYAAYLHTRFSRGWSGRRPALVAVAGIVVIVVCYIGVNLLGIGLHSYGWFFEA</sequence>
<comment type="function">
    <text evidence="2">Required during biogenesis of c-type cytochromes (cytochrome c6 and cytochrome f) at the step of heme attachment.</text>
</comment>
<comment type="subunit">
    <text evidence="1">May interact with ccs1.</text>
</comment>
<comment type="subcellular location">
    <subcellularLocation>
        <location evidence="2">Cellular thylakoid membrane</location>
        <topology evidence="2">Multi-pass membrane protein</topology>
    </subcellularLocation>
</comment>
<comment type="similarity">
    <text evidence="2">Belongs to the CcmF/CycK/Ccl1/NrfE/CcsA family.</text>
</comment>
<accession>Q7V806</accession>
<dbReference type="EMBL" id="BX548175">
    <property type="protein sequence ID" value="CAE20745.1"/>
    <property type="molecule type" value="Genomic_DNA"/>
</dbReference>
<dbReference type="RefSeq" id="WP_011129949.1">
    <property type="nucleotide sequence ID" value="NC_005071.1"/>
</dbReference>
<dbReference type="SMR" id="Q7V806"/>
<dbReference type="KEGG" id="pmt:PMT_0570"/>
<dbReference type="eggNOG" id="COG0755">
    <property type="taxonomic scope" value="Bacteria"/>
</dbReference>
<dbReference type="HOGENOM" id="CLU_049710_2_4_3"/>
<dbReference type="OrthoDB" id="9814290at2"/>
<dbReference type="Proteomes" id="UP000001423">
    <property type="component" value="Chromosome"/>
</dbReference>
<dbReference type="GO" id="GO:0031676">
    <property type="term" value="C:plasma membrane-derived thylakoid membrane"/>
    <property type="evidence" value="ECO:0007669"/>
    <property type="project" value="UniProtKB-SubCell"/>
</dbReference>
<dbReference type="GO" id="GO:0020037">
    <property type="term" value="F:heme binding"/>
    <property type="evidence" value="ECO:0007669"/>
    <property type="project" value="InterPro"/>
</dbReference>
<dbReference type="GO" id="GO:0015232">
    <property type="term" value="F:heme transmembrane transporter activity"/>
    <property type="evidence" value="ECO:0007669"/>
    <property type="project" value="InterPro"/>
</dbReference>
<dbReference type="GO" id="GO:0017004">
    <property type="term" value="P:cytochrome complex assembly"/>
    <property type="evidence" value="ECO:0007669"/>
    <property type="project" value="UniProtKB-UniRule"/>
</dbReference>
<dbReference type="HAMAP" id="MF_01391">
    <property type="entry name" value="CytC_CcsA"/>
    <property type="match status" value="1"/>
</dbReference>
<dbReference type="InterPro" id="IPR002541">
    <property type="entry name" value="Cyt_c_assembly"/>
</dbReference>
<dbReference type="InterPro" id="IPR003557">
    <property type="entry name" value="Cyt_c_biogenesis_CcmC"/>
</dbReference>
<dbReference type="InterPro" id="IPR017562">
    <property type="entry name" value="Cyt_c_biogenesis_CcsA"/>
</dbReference>
<dbReference type="InterPro" id="IPR045062">
    <property type="entry name" value="Cyt_c_biogenesis_CcsA/CcmC"/>
</dbReference>
<dbReference type="NCBIfam" id="TIGR03144">
    <property type="entry name" value="cytochr_II_ccsB"/>
    <property type="match status" value="1"/>
</dbReference>
<dbReference type="PANTHER" id="PTHR30071:SF1">
    <property type="entry name" value="CYTOCHROME B_B6 PROTEIN-RELATED"/>
    <property type="match status" value="1"/>
</dbReference>
<dbReference type="PANTHER" id="PTHR30071">
    <property type="entry name" value="HEME EXPORTER PROTEIN C"/>
    <property type="match status" value="1"/>
</dbReference>
<dbReference type="Pfam" id="PF01578">
    <property type="entry name" value="Cytochrom_C_asm"/>
    <property type="match status" value="1"/>
</dbReference>
<dbReference type="PRINTS" id="PR01386">
    <property type="entry name" value="CCMCBIOGNSIS"/>
</dbReference>
<reference key="1">
    <citation type="journal article" date="2003" name="Nature">
        <title>Genome divergence in two Prochlorococcus ecotypes reflects oceanic niche differentiation.</title>
        <authorList>
            <person name="Rocap G."/>
            <person name="Larimer F.W."/>
            <person name="Lamerdin J.E."/>
            <person name="Malfatti S."/>
            <person name="Chain P."/>
            <person name="Ahlgren N.A."/>
            <person name="Arellano A."/>
            <person name="Coleman M."/>
            <person name="Hauser L."/>
            <person name="Hess W.R."/>
            <person name="Johnson Z.I."/>
            <person name="Land M.L."/>
            <person name="Lindell D."/>
            <person name="Post A.F."/>
            <person name="Regala W."/>
            <person name="Shah M."/>
            <person name="Shaw S.L."/>
            <person name="Steglich C."/>
            <person name="Sullivan M.B."/>
            <person name="Ting C.S."/>
            <person name="Tolonen A."/>
            <person name="Webb E.A."/>
            <person name="Zinser E.R."/>
            <person name="Chisholm S.W."/>
        </authorList>
    </citation>
    <scope>NUCLEOTIDE SEQUENCE [LARGE SCALE GENOMIC DNA]</scope>
    <source>
        <strain>MIT 9313</strain>
    </source>
</reference>
<protein>
    <recommendedName>
        <fullName evidence="2">Cytochrome c biogenesis protein CcsA</fullName>
    </recommendedName>
</protein>
<evidence type="ECO:0000250" key="1"/>
<evidence type="ECO:0000255" key="2">
    <source>
        <dbReference type="HAMAP-Rule" id="MF_01391"/>
    </source>
</evidence>
<name>CCSA_PROMM</name>
<organism>
    <name type="scientific">Prochlorococcus marinus (strain MIT 9313)</name>
    <dbReference type="NCBI Taxonomy" id="74547"/>
    <lineage>
        <taxon>Bacteria</taxon>
        <taxon>Bacillati</taxon>
        <taxon>Cyanobacteriota</taxon>
        <taxon>Cyanophyceae</taxon>
        <taxon>Synechococcales</taxon>
        <taxon>Prochlorococcaceae</taxon>
        <taxon>Prochlorococcus</taxon>
    </lineage>
</organism>
<proteinExistence type="inferred from homology"/>
<feature type="chain" id="PRO_5000096686" description="Cytochrome c biogenesis protein CcsA">
    <location>
        <begin position="1"/>
        <end position="318"/>
    </location>
</feature>
<feature type="transmembrane region" description="Helical" evidence="2">
    <location>
        <begin position="17"/>
        <end position="37"/>
    </location>
</feature>
<feature type="transmembrane region" description="Helical" evidence="2">
    <location>
        <begin position="45"/>
        <end position="65"/>
    </location>
</feature>
<feature type="transmembrane region" description="Helical" evidence="2">
    <location>
        <begin position="75"/>
        <end position="95"/>
    </location>
</feature>
<feature type="transmembrane region" description="Helical" evidence="2">
    <location>
        <begin position="104"/>
        <end position="124"/>
    </location>
</feature>
<feature type="transmembrane region" description="Helical" evidence="2">
    <location>
        <begin position="149"/>
        <end position="169"/>
    </location>
</feature>
<feature type="transmembrane region" description="Helical" evidence="2">
    <location>
        <begin position="224"/>
        <end position="244"/>
    </location>
</feature>
<feature type="transmembrane region" description="Helical" evidence="2">
    <location>
        <begin position="258"/>
        <end position="275"/>
    </location>
</feature>
<feature type="transmembrane region" description="Helical" evidence="2">
    <location>
        <begin position="287"/>
        <end position="307"/>
    </location>
</feature>
<gene>
    <name evidence="2" type="primary">ccsA</name>
    <name type="ordered locus">PMT_0570</name>
</gene>
<keyword id="KW-0201">Cytochrome c-type biogenesis</keyword>
<keyword id="KW-0472">Membrane</keyword>
<keyword id="KW-1185">Reference proteome</keyword>
<keyword id="KW-0793">Thylakoid</keyword>
<keyword id="KW-0812">Transmembrane</keyword>
<keyword id="KW-1133">Transmembrane helix</keyword>